<keyword id="KW-0687">Ribonucleoprotein</keyword>
<keyword id="KW-0689">Ribosomal protein</keyword>
<keyword id="KW-0694">RNA-binding</keyword>
<keyword id="KW-0699">rRNA-binding</keyword>
<proteinExistence type="inferred from homology"/>
<feature type="chain" id="PRO_1000214250" description="Small ribosomal subunit protein uS8">
    <location>
        <begin position="1"/>
        <end position="130"/>
    </location>
</feature>
<reference key="1">
    <citation type="submission" date="2009-03" db="EMBL/GenBank/DDBJ databases">
        <title>Complete genome sequence of Edwardsiella ictaluri 93-146.</title>
        <authorList>
            <person name="Williams M.L."/>
            <person name="Gillaspy A.F."/>
            <person name="Dyer D.W."/>
            <person name="Thune R.L."/>
            <person name="Waldbieser G.C."/>
            <person name="Schuster S.C."/>
            <person name="Gipson J."/>
            <person name="Zaitshik J."/>
            <person name="Landry C."/>
            <person name="Lawrence M.L."/>
        </authorList>
    </citation>
    <scope>NUCLEOTIDE SEQUENCE [LARGE SCALE GENOMIC DNA]</scope>
    <source>
        <strain>93-146</strain>
    </source>
</reference>
<comment type="function">
    <text evidence="1">One of the primary rRNA binding proteins, it binds directly to 16S rRNA central domain where it helps coordinate assembly of the platform of the 30S subunit.</text>
</comment>
<comment type="subunit">
    <text evidence="1">Part of the 30S ribosomal subunit. Contacts proteins S5 and S12.</text>
</comment>
<comment type="similarity">
    <text evidence="1">Belongs to the universal ribosomal protein uS8 family.</text>
</comment>
<protein>
    <recommendedName>
        <fullName evidence="1">Small ribosomal subunit protein uS8</fullName>
    </recommendedName>
    <alternativeName>
        <fullName evidence="2">30S ribosomal protein S8</fullName>
    </alternativeName>
</protein>
<organism>
    <name type="scientific">Edwardsiella ictaluri (strain 93-146)</name>
    <dbReference type="NCBI Taxonomy" id="634503"/>
    <lineage>
        <taxon>Bacteria</taxon>
        <taxon>Pseudomonadati</taxon>
        <taxon>Pseudomonadota</taxon>
        <taxon>Gammaproteobacteria</taxon>
        <taxon>Enterobacterales</taxon>
        <taxon>Hafniaceae</taxon>
        <taxon>Edwardsiella</taxon>
    </lineage>
</organism>
<sequence length="130" mass="14119">MSMQDPIADMLTRIRNGQAANKVAVTMPSSKLKVAIANVLKEEGFIEDFKIEGDAKPVLELVLKYFQGKPVVESIQRISRPGLRIYKKKDELPKVMAGLGIAVVSTSKGVMTDRAARQAGLGGEIICYVA</sequence>
<gene>
    <name evidence="1" type="primary">rpsH</name>
    <name type="ordered locus">NT01EI_3580</name>
</gene>
<name>RS8_EDWI9</name>
<evidence type="ECO:0000255" key="1">
    <source>
        <dbReference type="HAMAP-Rule" id="MF_01302"/>
    </source>
</evidence>
<evidence type="ECO:0000305" key="2"/>
<accession>C5BGL1</accession>
<dbReference type="EMBL" id="CP001600">
    <property type="protein sequence ID" value="ACR70708.1"/>
    <property type="molecule type" value="Genomic_DNA"/>
</dbReference>
<dbReference type="RefSeq" id="WP_005290373.1">
    <property type="nucleotide sequence ID" value="NZ_CP169062.1"/>
</dbReference>
<dbReference type="SMR" id="C5BGL1"/>
<dbReference type="STRING" id="67780.B6E78_09500"/>
<dbReference type="GeneID" id="93122103"/>
<dbReference type="KEGG" id="eic:NT01EI_3580"/>
<dbReference type="HOGENOM" id="CLU_098428_0_0_6"/>
<dbReference type="OrthoDB" id="9802617at2"/>
<dbReference type="Proteomes" id="UP000001485">
    <property type="component" value="Chromosome"/>
</dbReference>
<dbReference type="GO" id="GO:1990904">
    <property type="term" value="C:ribonucleoprotein complex"/>
    <property type="evidence" value="ECO:0007669"/>
    <property type="project" value="UniProtKB-KW"/>
</dbReference>
<dbReference type="GO" id="GO:0005840">
    <property type="term" value="C:ribosome"/>
    <property type="evidence" value="ECO:0007669"/>
    <property type="project" value="UniProtKB-KW"/>
</dbReference>
<dbReference type="GO" id="GO:0019843">
    <property type="term" value="F:rRNA binding"/>
    <property type="evidence" value="ECO:0007669"/>
    <property type="project" value="UniProtKB-UniRule"/>
</dbReference>
<dbReference type="GO" id="GO:0003735">
    <property type="term" value="F:structural constituent of ribosome"/>
    <property type="evidence" value="ECO:0007669"/>
    <property type="project" value="InterPro"/>
</dbReference>
<dbReference type="GO" id="GO:0006412">
    <property type="term" value="P:translation"/>
    <property type="evidence" value="ECO:0007669"/>
    <property type="project" value="UniProtKB-UniRule"/>
</dbReference>
<dbReference type="FunFam" id="3.30.1370.30:FF:000003">
    <property type="entry name" value="30S ribosomal protein S8"/>
    <property type="match status" value="1"/>
</dbReference>
<dbReference type="FunFam" id="3.30.1490.10:FF:000001">
    <property type="entry name" value="30S ribosomal protein S8"/>
    <property type="match status" value="1"/>
</dbReference>
<dbReference type="Gene3D" id="3.30.1370.30">
    <property type="match status" value="1"/>
</dbReference>
<dbReference type="Gene3D" id="3.30.1490.10">
    <property type="match status" value="1"/>
</dbReference>
<dbReference type="HAMAP" id="MF_01302_B">
    <property type="entry name" value="Ribosomal_uS8_B"/>
    <property type="match status" value="1"/>
</dbReference>
<dbReference type="InterPro" id="IPR000630">
    <property type="entry name" value="Ribosomal_uS8"/>
</dbReference>
<dbReference type="InterPro" id="IPR047863">
    <property type="entry name" value="Ribosomal_uS8_CS"/>
</dbReference>
<dbReference type="InterPro" id="IPR035987">
    <property type="entry name" value="Ribosomal_uS8_sf"/>
</dbReference>
<dbReference type="NCBIfam" id="NF001109">
    <property type="entry name" value="PRK00136.1"/>
    <property type="match status" value="1"/>
</dbReference>
<dbReference type="PANTHER" id="PTHR11758">
    <property type="entry name" value="40S RIBOSOMAL PROTEIN S15A"/>
    <property type="match status" value="1"/>
</dbReference>
<dbReference type="Pfam" id="PF00410">
    <property type="entry name" value="Ribosomal_S8"/>
    <property type="match status" value="1"/>
</dbReference>
<dbReference type="SUPFAM" id="SSF56047">
    <property type="entry name" value="Ribosomal protein S8"/>
    <property type="match status" value="1"/>
</dbReference>
<dbReference type="PROSITE" id="PS00053">
    <property type="entry name" value="RIBOSOMAL_S8"/>
    <property type="match status" value="1"/>
</dbReference>